<accession>A0A2I6QAZ5</accession>
<accession>A0A1Y2IZG6</accession>
<protein>
    <recommendedName>
        <fullName evidence="6">AA14 family lytic polysaccharide monooxygenase A</fullName>
        <shortName evidence="6">LPMO AA14A</shortName>
        <ecNumber evidence="8">1.14.99.-</ecNumber>
    </recommendedName>
</protein>
<reference key="1">
    <citation type="journal article" date="2018" name="Nat. Chem. Biol.">
        <title>Lytic xylan oxidases from wood-decay fungi unlock biomass degradation.</title>
        <authorList>
            <person name="Couturier M."/>
            <person name="Ladeveze S."/>
            <person name="Sulzenbacher G."/>
            <person name="Ciano L."/>
            <person name="Fanuel M."/>
            <person name="Moreau C."/>
            <person name="Villares A."/>
            <person name="Cathala B."/>
            <person name="Chaspoul F."/>
            <person name="Frandsen K.E."/>
            <person name="Labourel A."/>
            <person name="Herpoel-Gimbert I."/>
            <person name="Grisel S."/>
            <person name="Haon M."/>
            <person name="Lenfant N."/>
            <person name="Rogniaux H."/>
            <person name="Ropartz D."/>
            <person name="Davies G.J."/>
            <person name="Rosso M.N."/>
            <person name="Walton P.H."/>
            <person name="Henrissat B."/>
            <person name="Berrin J.G."/>
        </authorList>
    </citation>
    <scope>NUCLEOTIDE SEQUENCE [MRNA]</scope>
    <scope>MASS SPECTROMETRY</scope>
    <scope>FUNCTION</scope>
    <scope>SUBCELLULAR LOCATION</scope>
    <scope>COFACTOR</scope>
    <scope>BIOTECHNOLOGY</scope>
    <source>
        <strain>BRFM310</strain>
    </source>
</reference>
<reference key="2">
    <citation type="journal article" date="2015" name="Biotechnol. Biofuels">
        <title>Enhanced degradation of softwood versus hardwood by the white-rot fungus Pycnoporus coccineus.</title>
        <authorList>
            <person name="Couturier M."/>
            <person name="Navarro D."/>
            <person name="Chevret D."/>
            <person name="Henrissat B."/>
            <person name="Piumi F."/>
            <person name="Ruiz-Duenas F.J."/>
            <person name="Martinez A.T."/>
            <person name="Grigoriev I.V."/>
            <person name="Riley R."/>
            <person name="Lipzen A."/>
            <person name="Berrin J.-G."/>
            <person name="Master E.R."/>
            <person name="Rosso M.-N."/>
        </authorList>
    </citation>
    <scope>NUCLEOTIDE SEQUENCE [LARGE SCALE GENOMIC DNA]</scope>
    <source>
        <strain>BRFM310</strain>
    </source>
</reference>
<reference key="3">
    <citation type="journal article" date="2023" name="FEBS Lett.">
        <title>Revisiting the AA14 family of lytic polysaccharide monooxygenases and their catalytic activity.</title>
        <authorList>
            <person name="Tuveng T.R."/>
            <person name="Oestby H."/>
            <person name="Tamburrini K.C."/>
            <person name="Bissaro B."/>
            <person name="Hegnar O.A."/>
            <person name="Stepnov A.A."/>
            <person name="Varnai A."/>
            <person name="Berrin J.G."/>
            <person name="Eijsink V.G.H."/>
        </authorList>
    </citation>
    <scope>FUNCTION</scope>
    <scope>CATALYTIC ACTIVITY</scope>
</reference>
<feature type="signal peptide" evidence="4">
    <location>
        <begin position="1"/>
        <end position="21"/>
    </location>
</feature>
<feature type="chain" id="PRO_5014369493" description="AA14 family lytic polysaccharide monooxygenase A">
    <location>
        <begin position="22"/>
        <end position="428"/>
    </location>
</feature>
<feature type="region of interest" description="Disordered" evidence="3">
    <location>
        <begin position="216"/>
        <end position="239"/>
    </location>
</feature>
<feature type="region of interest" description="Disordered" evidence="3">
    <location>
        <begin position="292"/>
        <end position="428"/>
    </location>
</feature>
<feature type="compositionally biased region" description="Basic and acidic residues" evidence="3">
    <location>
        <begin position="223"/>
        <end position="232"/>
    </location>
</feature>
<feature type="compositionally biased region" description="Low complexity" evidence="3">
    <location>
        <begin position="292"/>
        <end position="379"/>
    </location>
</feature>
<feature type="compositionally biased region" description="Polar residues" evidence="3">
    <location>
        <begin position="380"/>
        <end position="402"/>
    </location>
</feature>
<feature type="compositionally biased region" description="Basic residues" evidence="3">
    <location>
        <begin position="414"/>
        <end position="428"/>
    </location>
</feature>
<feature type="glycosylation site" description="N-linked (GlcNAc...) asparagine" evidence="2">
    <location>
        <position position="34"/>
    </location>
</feature>
<feature type="glycosylation site" description="N-linked (GlcNAc...) asparagine" evidence="2">
    <location>
        <position position="52"/>
    </location>
</feature>
<feature type="glycosylation site" description="N-linked (GlcNAc...) asparagine" evidence="2">
    <location>
        <position position="155"/>
    </location>
</feature>
<feature type="glycosylation site" description="N-linked (GlcNAc...) asparagine" evidence="2">
    <location>
        <position position="238"/>
    </location>
</feature>
<feature type="disulfide bond" evidence="1">
    <location>
        <begin position="88"/>
        <end position="112"/>
    </location>
</feature>
<feature type="disulfide bond" evidence="1">
    <location>
        <begin position="131"/>
        <end position="158"/>
    </location>
</feature>
<feature type="disulfide bond" evidence="1">
    <location>
        <begin position="174"/>
        <end position="179"/>
    </location>
</feature>
<feature type="disulfide bond" evidence="1">
    <location>
        <begin position="181"/>
        <end position="203"/>
    </location>
</feature>
<feature type="disulfide bond" evidence="1">
    <location>
        <begin position="223"/>
        <end position="239"/>
    </location>
</feature>
<dbReference type="EC" id="1.14.99.-" evidence="8"/>
<dbReference type="EMBL" id="KY769369">
    <property type="protein sequence ID" value="AUM86166.1"/>
    <property type="molecule type" value="mRNA"/>
</dbReference>
<dbReference type="EMBL" id="KZ084090">
    <property type="protein sequence ID" value="OSD06540.1"/>
    <property type="molecule type" value="Genomic_DNA"/>
</dbReference>
<dbReference type="SMR" id="A0A2I6QAZ5"/>
<dbReference type="OrthoDB" id="2019572at2759"/>
<dbReference type="BRENDA" id="1.14.99.54">
    <property type="organism ID" value="5234"/>
</dbReference>
<dbReference type="Proteomes" id="UP000193067">
    <property type="component" value="Unassembled WGS sequence"/>
</dbReference>
<dbReference type="GO" id="GO:0005576">
    <property type="term" value="C:extracellular region"/>
    <property type="evidence" value="ECO:0007669"/>
    <property type="project" value="UniProtKB-SubCell"/>
</dbReference>
<dbReference type="GO" id="GO:0046872">
    <property type="term" value="F:metal ion binding"/>
    <property type="evidence" value="ECO:0007669"/>
    <property type="project" value="UniProtKB-KW"/>
</dbReference>
<dbReference type="GO" id="GO:0004497">
    <property type="term" value="F:monooxygenase activity"/>
    <property type="evidence" value="ECO:0007669"/>
    <property type="project" value="UniProtKB-KW"/>
</dbReference>
<dbReference type="InterPro" id="IPR054497">
    <property type="entry name" value="LPMO_AA14"/>
</dbReference>
<dbReference type="Pfam" id="PF22810">
    <property type="entry name" value="LPMO_AA14"/>
    <property type="match status" value="1"/>
</dbReference>
<evidence type="ECO:0000250" key="1">
    <source>
        <dbReference type="UniProtKB" id="A0A2I6QB00"/>
    </source>
</evidence>
<evidence type="ECO:0000255" key="2">
    <source>
        <dbReference type="PROSITE-ProRule" id="PRU00498"/>
    </source>
</evidence>
<evidence type="ECO:0000256" key="3">
    <source>
        <dbReference type="SAM" id="MobiDB-lite"/>
    </source>
</evidence>
<evidence type="ECO:0000269" key="4">
    <source>
    </source>
</evidence>
<evidence type="ECO:0000269" key="5">
    <source>
    </source>
</evidence>
<evidence type="ECO:0000303" key="6">
    <source>
    </source>
</evidence>
<evidence type="ECO:0000305" key="7"/>
<evidence type="ECO:0000305" key="8">
    <source>
    </source>
</evidence>
<name>LP14A_TRAC3</name>
<organism>
    <name type="scientific">Trametes coccinea (strain BRFM310)</name>
    <name type="common">Pycnoporus coccineus</name>
    <dbReference type="NCBI Taxonomy" id="1353009"/>
    <lineage>
        <taxon>Eukaryota</taxon>
        <taxon>Fungi</taxon>
        <taxon>Dikarya</taxon>
        <taxon>Basidiomycota</taxon>
        <taxon>Agaricomycotina</taxon>
        <taxon>Agaricomycetes</taxon>
        <taxon>Polyporales</taxon>
        <taxon>Polyporaceae</taxon>
        <taxon>Trametes</taxon>
    </lineage>
</organism>
<comment type="function">
    <text evidence="4 5">Lytic polysaccharide monooxygenase (LPMO) showing oxidase and peroxidase activities that are common for LPMOs (PubMed:37418595). Catalysis by LPMOs requires the reduction of the active-site copper from Cu(II) to Cu(I) by a reducing agent and H(2)O(2) or O(2) as a cosubstrate (PubMed:29377002, PubMed:37418595). Shows no activity on cellulose-associated xylan or any other tested polysaccharide substrate, meaning that the substrate rremains unknown (PubMed:37418595).</text>
</comment>
<comment type="cofactor">
    <cofactor evidence="4">
        <name>Cu(2+)</name>
        <dbReference type="ChEBI" id="CHEBI:29036"/>
    </cofactor>
    <text evidence="4">Binds 1 copper ion per subunit.</text>
</comment>
<comment type="subcellular location">
    <subcellularLocation>
        <location evidence="4">Secreted</location>
    </subcellularLocation>
</comment>
<comment type="mass spectrometry" mass="43450.0" method="MALDI" evidence="4"/>
<comment type="similarity">
    <text evidence="7">Belongs to the polysaccharide monooxygenase AA14 family.</text>
</comment>
<comment type="caution">
    <text evidence="4 5">Was originally described as having strict xylanolytic activity (PubMed:29377002). However, further studies could not detect activity on any of the tested polysaccharide substrates including xylan, and no synergistic effects between AA14A and a xylanase was observed, leading to the conclusion that the substrate remains unknown (PubMed:37418595).</text>
</comment>
<proteinExistence type="evidence at protein level"/>
<gene>
    <name evidence="6" type="primary">AA14A</name>
    <name type="ORF">PYCCODRAFT_1422767</name>
</gene>
<keyword id="KW-0186">Copper</keyword>
<keyword id="KW-1015">Disulfide bond</keyword>
<keyword id="KW-0325">Glycoprotein</keyword>
<keyword id="KW-0479">Metal-binding</keyword>
<keyword id="KW-0503">Monooxygenase</keyword>
<keyword id="KW-0560">Oxidoreductase</keyword>
<keyword id="KW-1185">Reference proteome</keyword>
<keyword id="KW-0964">Secreted</keyword>
<keyword id="KW-0732">Signal</keyword>
<sequence length="428" mass="45473">MLRSLPASLALVAAFASKASAHAAFWDKSMYGFNVTAQTFPYDNRPQVPLYNMTFDQWWFHGHKDYPPNEGDFFELPAGGEVNSIISCDKGATPFYESSPGGDSGYGSNSPCPGQPMSEYHTTGIDDVKGCCMAIAYKPDVNDVQPDDFVVFSCNSTCVWEMNTKFEIPKLPACPEGGCHCAWFWIHSYDSGAEQIYMNGFKCKVTGDVGTQPLGKPAVPRRCGADPDHGKPDPTPGNCTIGAKTPMYWYQREGNNMFEDTYDAPYYNPLYGFNDGAQNDIFMDGVIASLASSGTGSSPTSTVDSSSSAAAASTSYPAQPTSSTQDAPGSSAYPSSSSDSVNSPTTQPYPASSASSTSEAQTTPAAVPTSVATEASSSPIASTTVDEAVVSSSTVGSINPTRSCKPRPSGVAAQKKKRKHARHLHNAH</sequence>